<reference key="1">
    <citation type="journal article" date="2008" name="J. Bacteriol.">
        <title>The pangenome structure of Escherichia coli: comparative genomic analysis of E. coli commensal and pathogenic isolates.</title>
        <authorList>
            <person name="Rasko D.A."/>
            <person name="Rosovitz M.J."/>
            <person name="Myers G.S.A."/>
            <person name="Mongodin E.F."/>
            <person name="Fricke W.F."/>
            <person name="Gajer P."/>
            <person name="Crabtree J."/>
            <person name="Sebaihia M."/>
            <person name="Thomson N.R."/>
            <person name="Chaudhuri R."/>
            <person name="Henderson I.R."/>
            <person name="Sperandio V."/>
            <person name="Ravel J."/>
        </authorList>
    </citation>
    <scope>NUCLEOTIDE SEQUENCE [LARGE SCALE GENOMIC DNA]</scope>
    <source>
        <strain>E24377A / ETEC</strain>
    </source>
</reference>
<comment type="function">
    <text evidence="1">NDH-1 shuttles electrons from NADH, via FMN and iron-sulfur (Fe-S) centers, to quinones in the respiratory chain. The immediate electron acceptor for the enzyme in this species is believed to be ubiquinone. Couples the redox reaction to proton translocation (for every two electrons transferred, four hydrogen ions are translocated across the cytoplasmic membrane), and thus conserves the redox energy in a proton gradient. This subunit may bind ubiquinone.</text>
</comment>
<comment type="catalytic activity">
    <reaction evidence="1">
        <text>a quinone + NADH + 5 H(+)(in) = a quinol + NAD(+) + 4 H(+)(out)</text>
        <dbReference type="Rhea" id="RHEA:57888"/>
        <dbReference type="ChEBI" id="CHEBI:15378"/>
        <dbReference type="ChEBI" id="CHEBI:24646"/>
        <dbReference type="ChEBI" id="CHEBI:57540"/>
        <dbReference type="ChEBI" id="CHEBI:57945"/>
        <dbReference type="ChEBI" id="CHEBI:132124"/>
    </reaction>
</comment>
<comment type="subunit">
    <text evidence="1">NDH-1 is composed of 13 different subunits. Subunits NuoA, H, J, K, L, M, N constitute the membrane sector of the complex.</text>
</comment>
<comment type="subcellular location">
    <subcellularLocation>
        <location evidence="1">Cell inner membrane</location>
        <topology evidence="1">Multi-pass membrane protein</topology>
    </subcellularLocation>
</comment>
<comment type="similarity">
    <text evidence="1">Belongs to the complex I subunit 1 family.</text>
</comment>
<keyword id="KW-0997">Cell inner membrane</keyword>
<keyword id="KW-1003">Cell membrane</keyword>
<keyword id="KW-0472">Membrane</keyword>
<keyword id="KW-0520">NAD</keyword>
<keyword id="KW-0874">Quinone</keyword>
<keyword id="KW-1185">Reference proteome</keyword>
<keyword id="KW-1278">Translocase</keyword>
<keyword id="KW-0812">Transmembrane</keyword>
<keyword id="KW-1133">Transmembrane helix</keyword>
<keyword id="KW-0830">Ubiquinone</keyword>
<protein>
    <recommendedName>
        <fullName evidence="1">NADH-quinone oxidoreductase subunit H</fullName>
        <ecNumber evidence="1">7.1.1.-</ecNumber>
    </recommendedName>
    <alternativeName>
        <fullName evidence="1">NADH dehydrogenase I subunit H</fullName>
    </alternativeName>
    <alternativeName>
        <fullName evidence="1">NDH-1 subunit H</fullName>
    </alternativeName>
</protein>
<gene>
    <name evidence="1" type="primary">nuoH</name>
    <name type="ordered locus">EcE24377A_2575</name>
</gene>
<sequence>MSWISPELIEILLTILKAVVILLVVVTCGAFMSFGERRLLGLFQNRYGPNRVGWGGSLQLVADMIKMFFKEDWIPKFSDRVIFTLAPMIAFTSLLLAFAIVPVSPGWVVADLNIGILFFLMMAGLAVYAVLFAGWSSNNKYSLLGAMRASAQTLSYEVFLGLSLMGVVAQAGSFNMTDIVNSQAHVWNVIPQFFGFITFAIAGVAVCHRHPFDQPEAEQELADGYHIEYSGMKFGLFFVGEYIGIVTISALMVTLFFGGWQGPLLPPFIWFALKTAFFMMMFILIRASLPRPRYDQVMSFGWKICLPLTLINLLVTAAVILWQAQ</sequence>
<evidence type="ECO:0000255" key="1">
    <source>
        <dbReference type="HAMAP-Rule" id="MF_01350"/>
    </source>
</evidence>
<feature type="chain" id="PRO_1000067741" description="NADH-quinone oxidoreductase subunit H">
    <location>
        <begin position="1"/>
        <end position="325"/>
    </location>
</feature>
<feature type="transmembrane region" description="Helical" evidence="1">
    <location>
        <begin position="11"/>
        <end position="31"/>
    </location>
</feature>
<feature type="transmembrane region" description="Helical" evidence="1">
    <location>
        <begin position="81"/>
        <end position="101"/>
    </location>
</feature>
<feature type="transmembrane region" description="Helical" evidence="1">
    <location>
        <begin position="114"/>
        <end position="134"/>
    </location>
</feature>
<feature type="transmembrane region" description="Helical" evidence="1">
    <location>
        <begin position="154"/>
        <end position="174"/>
    </location>
</feature>
<feature type="transmembrane region" description="Helical" evidence="1">
    <location>
        <begin position="186"/>
        <end position="206"/>
    </location>
</feature>
<feature type="transmembrane region" description="Helical" evidence="1">
    <location>
        <begin position="237"/>
        <end position="257"/>
    </location>
</feature>
<feature type="transmembrane region" description="Helical" evidence="1">
    <location>
        <begin position="265"/>
        <end position="285"/>
    </location>
</feature>
<feature type="transmembrane region" description="Helical" evidence="1">
    <location>
        <begin position="304"/>
        <end position="324"/>
    </location>
</feature>
<name>NUOH_ECO24</name>
<organism>
    <name type="scientific">Escherichia coli O139:H28 (strain E24377A / ETEC)</name>
    <dbReference type="NCBI Taxonomy" id="331111"/>
    <lineage>
        <taxon>Bacteria</taxon>
        <taxon>Pseudomonadati</taxon>
        <taxon>Pseudomonadota</taxon>
        <taxon>Gammaproteobacteria</taxon>
        <taxon>Enterobacterales</taxon>
        <taxon>Enterobacteriaceae</taxon>
        <taxon>Escherichia</taxon>
    </lineage>
</organism>
<dbReference type="EC" id="7.1.1.-" evidence="1"/>
<dbReference type="EMBL" id="CP000800">
    <property type="protein sequence ID" value="ABV18370.1"/>
    <property type="molecule type" value="Genomic_DNA"/>
</dbReference>
<dbReference type="RefSeq" id="WP_000118507.1">
    <property type="nucleotide sequence ID" value="NC_009801.1"/>
</dbReference>
<dbReference type="SMR" id="A7ZP96"/>
<dbReference type="GeneID" id="93774892"/>
<dbReference type="KEGG" id="ecw:EcE24377A_2575"/>
<dbReference type="HOGENOM" id="CLU_015134_0_1_6"/>
<dbReference type="Proteomes" id="UP000001122">
    <property type="component" value="Chromosome"/>
</dbReference>
<dbReference type="GO" id="GO:0005886">
    <property type="term" value="C:plasma membrane"/>
    <property type="evidence" value="ECO:0007669"/>
    <property type="project" value="UniProtKB-SubCell"/>
</dbReference>
<dbReference type="GO" id="GO:0003954">
    <property type="term" value="F:NADH dehydrogenase activity"/>
    <property type="evidence" value="ECO:0007669"/>
    <property type="project" value="TreeGrafter"/>
</dbReference>
<dbReference type="GO" id="GO:0016655">
    <property type="term" value="F:oxidoreductase activity, acting on NAD(P)H, quinone or similar compound as acceptor"/>
    <property type="evidence" value="ECO:0007669"/>
    <property type="project" value="UniProtKB-UniRule"/>
</dbReference>
<dbReference type="GO" id="GO:0048038">
    <property type="term" value="F:quinone binding"/>
    <property type="evidence" value="ECO:0007669"/>
    <property type="project" value="UniProtKB-KW"/>
</dbReference>
<dbReference type="GO" id="GO:0009060">
    <property type="term" value="P:aerobic respiration"/>
    <property type="evidence" value="ECO:0007669"/>
    <property type="project" value="TreeGrafter"/>
</dbReference>
<dbReference type="HAMAP" id="MF_01350">
    <property type="entry name" value="NDH1_NuoH"/>
    <property type="match status" value="1"/>
</dbReference>
<dbReference type="InterPro" id="IPR001694">
    <property type="entry name" value="NADH_UbQ_OxRdtase_su1/FPO"/>
</dbReference>
<dbReference type="InterPro" id="IPR018086">
    <property type="entry name" value="NADH_UbQ_OxRdtase_su1_CS"/>
</dbReference>
<dbReference type="NCBIfam" id="NF004740">
    <property type="entry name" value="PRK06076.1-1"/>
    <property type="match status" value="1"/>
</dbReference>
<dbReference type="NCBIfam" id="NF004741">
    <property type="entry name" value="PRK06076.1-2"/>
    <property type="match status" value="1"/>
</dbReference>
<dbReference type="PANTHER" id="PTHR11432">
    <property type="entry name" value="NADH DEHYDROGENASE SUBUNIT 1"/>
    <property type="match status" value="1"/>
</dbReference>
<dbReference type="PANTHER" id="PTHR11432:SF3">
    <property type="entry name" value="NADH-UBIQUINONE OXIDOREDUCTASE CHAIN 1"/>
    <property type="match status" value="1"/>
</dbReference>
<dbReference type="Pfam" id="PF00146">
    <property type="entry name" value="NADHdh"/>
    <property type="match status" value="1"/>
</dbReference>
<dbReference type="PROSITE" id="PS00667">
    <property type="entry name" value="COMPLEX1_ND1_1"/>
    <property type="match status" value="1"/>
</dbReference>
<dbReference type="PROSITE" id="PS00668">
    <property type="entry name" value="COMPLEX1_ND1_2"/>
    <property type="match status" value="1"/>
</dbReference>
<proteinExistence type="inferred from homology"/>
<accession>A7ZP96</accession>